<reference key="1">
    <citation type="journal article" date="2007" name="Science">
        <title>The Chlamydomonas genome reveals the evolution of key animal and plant functions.</title>
        <authorList>
            <person name="Merchant S.S."/>
            <person name="Prochnik S.E."/>
            <person name="Vallon O."/>
            <person name="Harris E.H."/>
            <person name="Karpowicz S.J."/>
            <person name="Witman G.B."/>
            <person name="Terry A."/>
            <person name="Salamov A."/>
            <person name="Fritz-Laylin L.K."/>
            <person name="Marechal-Drouard L."/>
            <person name="Marshall W.F."/>
            <person name="Qu L.H."/>
            <person name="Nelson D.R."/>
            <person name="Sanderfoot A.A."/>
            <person name="Spalding M.H."/>
            <person name="Kapitonov V.V."/>
            <person name="Ren Q."/>
            <person name="Ferris P."/>
            <person name="Lindquist E."/>
            <person name="Shapiro H."/>
            <person name="Lucas S.M."/>
            <person name="Grimwood J."/>
            <person name="Schmutz J."/>
            <person name="Cardol P."/>
            <person name="Cerutti H."/>
            <person name="Chanfreau G."/>
            <person name="Chen C.L."/>
            <person name="Cognat V."/>
            <person name="Croft M.T."/>
            <person name="Dent R."/>
            <person name="Dutcher S."/>
            <person name="Fernandez E."/>
            <person name="Fukuzawa H."/>
            <person name="Gonzalez-Ballester D."/>
            <person name="Gonzalez-Halphen D."/>
            <person name="Hallmann A."/>
            <person name="Hanikenne M."/>
            <person name="Hippler M."/>
            <person name="Inwood W."/>
            <person name="Jabbari K."/>
            <person name="Kalanon M."/>
            <person name="Kuras R."/>
            <person name="Lefebvre P.A."/>
            <person name="Lemaire S.D."/>
            <person name="Lobanov A.V."/>
            <person name="Lohr M."/>
            <person name="Manuell A."/>
            <person name="Meier I."/>
            <person name="Mets L."/>
            <person name="Mittag M."/>
            <person name="Mittelmeier T."/>
            <person name="Moroney J.V."/>
            <person name="Moseley J."/>
            <person name="Napoli C."/>
            <person name="Nedelcu A.M."/>
            <person name="Niyogi K."/>
            <person name="Novoselov S.V."/>
            <person name="Paulsen I.T."/>
            <person name="Pazour G.J."/>
            <person name="Purton S."/>
            <person name="Ral J.P."/>
            <person name="Riano-Pachon D.M."/>
            <person name="Riekhof W."/>
            <person name="Rymarquis L."/>
            <person name="Schroda M."/>
            <person name="Stern D."/>
            <person name="Umen J."/>
            <person name="Willows R."/>
            <person name="Wilson N."/>
            <person name="Zimmer S.L."/>
            <person name="Allmer J."/>
            <person name="Balk J."/>
            <person name="Bisova K."/>
            <person name="Chen C.J."/>
            <person name="Elias M."/>
            <person name="Gendler K."/>
            <person name="Hauser C."/>
            <person name="Lamb M.R."/>
            <person name="Ledford H."/>
            <person name="Long J.C."/>
            <person name="Minagawa J."/>
            <person name="Page M.D."/>
            <person name="Pan J."/>
            <person name="Pootakham W."/>
            <person name="Roje S."/>
            <person name="Rose A."/>
            <person name="Stahlberg E."/>
            <person name="Terauchi A.M."/>
            <person name="Yang P."/>
            <person name="Ball S."/>
            <person name="Bowler C."/>
            <person name="Dieckmann C.L."/>
            <person name="Gladyshev V.N."/>
            <person name="Green P."/>
            <person name="Jorgensen R."/>
            <person name="Mayfield S."/>
            <person name="Mueller-Roeber B."/>
            <person name="Rajamani S."/>
            <person name="Sayre R.T."/>
            <person name="Brokstein P."/>
            <person name="Dubchak I."/>
            <person name="Goodstein D."/>
            <person name="Hornick L."/>
            <person name="Huang Y.W."/>
            <person name="Jhaveri J."/>
            <person name="Luo Y."/>
            <person name="Martinez D."/>
            <person name="Ngau W.C."/>
            <person name="Otillar B."/>
            <person name="Poliakov A."/>
            <person name="Porter A."/>
            <person name="Szajkowski L."/>
            <person name="Werner G."/>
            <person name="Zhou K."/>
            <person name="Grigoriev I.V."/>
            <person name="Rokhsar D.S."/>
            <person name="Grossman A.R."/>
        </authorList>
    </citation>
    <scope>NUCLEOTIDE SEQUENCE [LARGE SCALE GENOMIC DNA]</scope>
    <source>
        <strain>CC-503</strain>
    </source>
</reference>
<reference key="2">
    <citation type="journal article" date="2023" name="EMBO J.">
        <title>Shuffled ATG8 interacting motifs form an ancestral bridge between UFMylation and autophagy.</title>
        <authorList>
            <person name="Picchianti L."/>
            <person name="Sanchez de Medina Hernandez V."/>
            <person name="Zhan N."/>
            <person name="Irwin N.A."/>
            <person name="Groh R."/>
            <person name="Stephani M."/>
            <person name="Hornegger H."/>
            <person name="Beveridge R."/>
            <person name="Sawa-Makarska J."/>
            <person name="Lendl T."/>
            <person name="Grujic N."/>
            <person name="Naumann C."/>
            <person name="Martens S."/>
            <person name="Richards T.A."/>
            <person name="Clausen T."/>
            <person name="Ramundo S."/>
            <person name="Karagoez G.E."/>
            <person name="Dagdas Y."/>
        </authorList>
    </citation>
    <scope>INTERACTION WITH ATG8 FAMILY PROTEINS</scope>
    <scope>DOMAIN</scope>
    <scope>MUTAGENESIS OF TRP-276; TRP-287 AND TRP-335</scope>
</reference>
<keyword id="KW-1185">Reference proteome</keyword>
<organism>
    <name type="scientific">Chlamydomonas reinhardtii</name>
    <name type="common">Chlamydomonas smithii</name>
    <dbReference type="NCBI Taxonomy" id="3055"/>
    <lineage>
        <taxon>Eukaryota</taxon>
        <taxon>Viridiplantae</taxon>
        <taxon>Chlorophyta</taxon>
        <taxon>core chlorophytes</taxon>
        <taxon>Chlorophyceae</taxon>
        <taxon>CS clade</taxon>
        <taxon>Chlamydomonadales</taxon>
        <taxon>Chlamydomonadaceae</taxon>
        <taxon>Chlamydomonas</taxon>
    </lineage>
</organism>
<dbReference type="EMBL" id="CM008962">
    <property type="protein sequence ID" value="PNW88844.1"/>
    <property type="molecule type" value="Genomic_DNA"/>
</dbReference>
<dbReference type="RefSeq" id="XP_042928819.1">
    <property type="nucleotide sequence ID" value="XM_043058905.1"/>
</dbReference>
<dbReference type="SMR" id="A0A2K3E7S8"/>
<dbReference type="FunCoup" id="A0A2K3E7S8">
    <property type="interactions" value="1639"/>
</dbReference>
<dbReference type="STRING" id="3055.A0A2K3E7S8"/>
<dbReference type="EnsemblPlants" id="PNW88844">
    <property type="protein sequence ID" value="PNW88844"/>
    <property type="gene ID" value="CHLRE_01g047229v5"/>
</dbReference>
<dbReference type="GeneID" id="66052150"/>
<dbReference type="Gramene" id="PNW88844">
    <property type="protein sequence ID" value="PNW88844"/>
    <property type="gene ID" value="CHLRE_01g047229v5"/>
</dbReference>
<dbReference type="InParanoid" id="A0A2K3E7S8"/>
<dbReference type="OrthoDB" id="340432at2759"/>
<dbReference type="Proteomes" id="UP000006906">
    <property type="component" value="Chromosome 1"/>
</dbReference>
<dbReference type="GO" id="GO:0012505">
    <property type="term" value="C:endomembrane system"/>
    <property type="evidence" value="ECO:0000318"/>
    <property type="project" value="GO_Central"/>
</dbReference>
<dbReference type="GO" id="GO:0007346">
    <property type="term" value="P:regulation of mitotic cell cycle"/>
    <property type="evidence" value="ECO:0000318"/>
    <property type="project" value="GO_Central"/>
</dbReference>
<dbReference type="InterPro" id="IPR008491">
    <property type="entry name" value="CDK5RAP3"/>
</dbReference>
<dbReference type="PANTHER" id="PTHR14894">
    <property type="entry name" value="CDK5 REGULATORY SUBUNIT-ASSOCIATED PROTEIN 3"/>
    <property type="match status" value="1"/>
</dbReference>
<dbReference type="PANTHER" id="PTHR14894:SF0">
    <property type="entry name" value="CDK5 REGULATORY SUBUNIT-ASSOCIATED PROTEIN 3"/>
    <property type="match status" value="1"/>
</dbReference>
<dbReference type="Pfam" id="PF05600">
    <property type="entry name" value="CDK5RAP3"/>
    <property type="match status" value="1"/>
</dbReference>
<sequence>MSEPAIARLIGEGVERPEASLPIDINYAKLTEWLVTRQKIPKDWHKRLQVIQAKAAEAVKELPPGTLSSLTDGADAPVDYMRAVEIRDKLASTSERTMFGGLQGPAATWDKIVKAYEKQFVYLGEAGQCLVQNVDFEIPYLRRNAAKLAGQLADGERKQGEYTRAAAACAAKYKEECKKLGISGAAVRAELRALAGELPGLLRGVVDSLHQPRLQEAAEYYAAFTRFAHAPRAGAPSSAKGPASSASAPPALEPESMLPVLFEIRNRRTAPPEAESGAAGAGASGQGGGIEIDWGDSGGDAGGAGVAAIDIDWDAPTAAPEGDAAAAAGPAVDINWDFDMADLAAAAGDDAGGTAAAPTADASAGPVGIDWDIEVDAAGDAAADANNRAGDVAEGEAAASLSGGGGGGASSGDPDDVAAARLERDADYRARLVDDLTELRAFLAQRKSDLAAGGSELTATALPDAVSSVDAAAVASMLGSVQAVLGQLGTPRFRQLLLIATSPRYLDRLEARLQRQAGAEAKMLAAAAEAVARQHEARAGLAAQAPRTAALVARCRRLKGVVERGIAASLGGKRSVNVLGEINNVLASAGQ</sequence>
<feature type="chain" id="PRO_0000460556" description="CDK5RAP3 protein homolog">
    <location>
        <begin position="1"/>
        <end position="591"/>
    </location>
</feature>
<feature type="region of interest" description="Disordered" evidence="3">
    <location>
        <begin position="232"/>
        <end position="252"/>
    </location>
</feature>
<feature type="region of interest" description="Disordered" evidence="3">
    <location>
        <begin position="269"/>
        <end position="303"/>
    </location>
</feature>
<feature type="region of interest" description="Disordered" evidence="3">
    <location>
        <begin position="386"/>
        <end position="416"/>
    </location>
</feature>
<feature type="short sequence motif" description="Shuffled ATG8-binding motif 1" evidence="4">
    <location>
        <begin position="311"/>
        <end position="314"/>
    </location>
</feature>
<feature type="short sequence motif" description="Shuffled ATG8-binding motif 2" evidence="4">
    <location>
        <begin position="334"/>
        <end position="337"/>
    </location>
</feature>
<feature type="short sequence motif" description="Shuffled ATG8-binding motif 3" evidence="4">
    <location>
        <begin position="369"/>
        <end position="372"/>
    </location>
</feature>
<feature type="compositionally biased region" description="Low complexity" evidence="3">
    <location>
        <begin position="232"/>
        <end position="250"/>
    </location>
</feature>
<feature type="compositionally biased region" description="Gly residues" evidence="3">
    <location>
        <begin position="279"/>
        <end position="303"/>
    </location>
</feature>
<feature type="compositionally biased region" description="Low complexity" evidence="3">
    <location>
        <begin position="386"/>
        <end position="401"/>
    </location>
</feature>
<evidence type="ECO:0000250" key="1">
    <source>
        <dbReference type="UniProtKB" id="Q96JB5"/>
    </source>
</evidence>
<evidence type="ECO:0000250" key="2">
    <source>
        <dbReference type="UniProtKB" id="Q9FG23"/>
    </source>
</evidence>
<evidence type="ECO:0000256" key="3">
    <source>
        <dbReference type="SAM" id="MobiDB-lite"/>
    </source>
</evidence>
<evidence type="ECO:0000269" key="4">
    <source>
    </source>
</evidence>
<evidence type="ECO:0000305" key="5"/>
<evidence type="ECO:0000312" key="6">
    <source>
        <dbReference type="EMBL" id="PNW88844.1"/>
    </source>
</evidence>
<comment type="function">
    <text evidence="2">Substrate adapter of E3 ligase complexes mediating ufmylation, the covalent attachment of the ubiquitin-like modifier UFM1 to substrate proteins, and which is involved in various processes, such as ribosome recycling and reticulophagy (also called ER-phagy).</text>
</comment>
<comment type="subunit">
    <text evidence="1 4">Substrate adapter component of the UFM1 ribosome E3 ligase (UREL) complex (By similarity). Interacts with ATG8 family proteins (PubMed:36762703).</text>
</comment>
<comment type="domain">
    <text evidence="4">The shuffled ATG8-binding motifs mediate interaction with both ATG8 family protein and UFM1.</text>
</comment>
<comment type="similarity">
    <text evidence="5">Belongs to the CDK5RAP3 family.</text>
</comment>
<accession>A0A2K3E7S8</accession>
<protein>
    <recommendedName>
        <fullName>CDK5RAP3 protein homolog</fullName>
    </recommendedName>
</protein>
<gene>
    <name evidence="6" type="ORF">CHLRE_01g047229v5</name>
</gene>
<proteinExistence type="evidence at protein level"/>
<name>CK5P3_CHLRE</name>